<keyword id="KW-0687">Ribonucleoprotein</keyword>
<keyword id="KW-0689">Ribosomal protein</keyword>
<dbReference type="EMBL" id="CP000107">
    <property type="protein sequence ID" value="AAZ68578.1"/>
    <property type="molecule type" value="Genomic_DNA"/>
</dbReference>
<dbReference type="RefSeq" id="WP_011304656.1">
    <property type="nucleotide sequence ID" value="NC_007354.1"/>
</dbReference>
<dbReference type="SMR" id="Q3YRS7"/>
<dbReference type="FunCoup" id="Q3YRS7">
    <property type="interactions" value="230"/>
</dbReference>
<dbReference type="STRING" id="269484.Ecaj_0542"/>
<dbReference type="KEGG" id="ecn:Ecaj_0542"/>
<dbReference type="eggNOG" id="COG0227">
    <property type="taxonomic scope" value="Bacteria"/>
</dbReference>
<dbReference type="HOGENOM" id="CLU_064548_4_2_5"/>
<dbReference type="InParanoid" id="Q3YRS7"/>
<dbReference type="Proteomes" id="UP000000435">
    <property type="component" value="Chromosome"/>
</dbReference>
<dbReference type="GO" id="GO:0022625">
    <property type="term" value="C:cytosolic large ribosomal subunit"/>
    <property type="evidence" value="ECO:0007669"/>
    <property type="project" value="TreeGrafter"/>
</dbReference>
<dbReference type="GO" id="GO:0003735">
    <property type="term" value="F:structural constituent of ribosome"/>
    <property type="evidence" value="ECO:0007669"/>
    <property type="project" value="InterPro"/>
</dbReference>
<dbReference type="GO" id="GO:0006412">
    <property type="term" value="P:translation"/>
    <property type="evidence" value="ECO:0007669"/>
    <property type="project" value="UniProtKB-UniRule"/>
</dbReference>
<dbReference type="Gene3D" id="2.30.170.40">
    <property type="entry name" value="Ribosomal protein L28/L24"/>
    <property type="match status" value="1"/>
</dbReference>
<dbReference type="HAMAP" id="MF_00373">
    <property type="entry name" value="Ribosomal_bL28"/>
    <property type="match status" value="1"/>
</dbReference>
<dbReference type="InterPro" id="IPR026569">
    <property type="entry name" value="Ribosomal_bL28"/>
</dbReference>
<dbReference type="InterPro" id="IPR034704">
    <property type="entry name" value="Ribosomal_bL28/bL31-like_sf"/>
</dbReference>
<dbReference type="InterPro" id="IPR001383">
    <property type="entry name" value="Ribosomal_bL28_bact-type"/>
</dbReference>
<dbReference type="InterPro" id="IPR037147">
    <property type="entry name" value="Ribosomal_bL28_sf"/>
</dbReference>
<dbReference type="NCBIfam" id="TIGR00009">
    <property type="entry name" value="L28"/>
    <property type="match status" value="1"/>
</dbReference>
<dbReference type="PANTHER" id="PTHR13528">
    <property type="entry name" value="39S RIBOSOMAL PROTEIN L28, MITOCHONDRIAL"/>
    <property type="match status" value="1"/>
</dbReference>
<dbReference type="PANTHER" id="PTHR13528:SF2">
    <property type="entry name" value="LARGE RIBOSOMAL SUBUNIT PROTEIN BL28M"/>
    <property type="match status" value="1"/>
</dbReference>
<dbReference type="Pfam" id="PF00830">
    <property type="entry name" value="Ribosomal_L28"/>
    <property type="match status" value="1"/>
</dbReference>
<dbReference type="SUPFAM" id="SSF143800">
    <property type="entry name" value="L28p-like"/>
    <property type="match status" value="1"/>
</dbReference>
<protein>
    <recommendedName>
        <fullName evidence="1">Large ribosomal subunit protein bL28</fullName>
    </recommendedName>
    <alternativeName>
        <fullName evidence="3">50S ribosomal protein L28</fullName>
    </alternativeName>
</protein>
<feature type="chain" id="PRO_1000007230" description="Large ribosomal subunit protein bL28">
    <location>
        <begin position="1"/>
        <end position="100"/>
    </location>
</feature>
<feature type="region of interest" description="Disordered" evidence="2">
    <location>
        <begin position="1"/>
        <end position="21"/>
    </location>
</feature>
<feature type="compositionally biased region" description="Polar residues" evidence="2">
    <location>
        <begin position="10"/>
        <end position="19"/>
    </location>
</feature>
<name>RL28_EHRCJ</name>
<evidence type="ECO:0000255" key="1">
    <source>
        <dbReference type="HAMAP-Rule" id="MF_00373"/>
    </source>
</evidence>
<evidence type="ECO:0000256" key="2">
    <source>
        <dbReference type="SAM" id="MobiDB-lite"/>
    </source>
</evidence>
<evidence type="ECO:0000305" key="3"/>
<proteinExistence type="inferred from homology"/>
<sequence>MSRVCDITGQGKSFGNKVSHSNRKTKRTYLVNLHNVTLLSDILNRKFKFKVSSRTLRTIDYKGGFDLYLLNTSSRKLTDKAQKIKKLVKNAVAKGVKVSL</sequence>
<organism>
    <name type="scientific">Ehrlichia canis (strain Jake)</name>
    <dbReference type="NCBI Taxonomy" id="269484"/>
    <lineage>
        <taxon>Bacteria</taxon>
        <taxon>Pseudomonadati</taxon>
        <taxon>Pseudomonadota</taxon>
        <taxon>Alphaproteobacteria</taxon>
        <taxon>Rickettsiales</taxon>
        <taxon>Anaplasmataceae</taxon>
        <taxon>Ehrlichia</taxon>
    </lineage>
</organism>
<reference key="1">
    <citation type="journal article" date="2006" name="J. Bacteriol.">
        <title>The genome of the obligately intracellular bacterium Ehrlichia canis reveals themes of complex membrane structure and immune evasion strategies.</title>
        <authorList>
            <person name="Mavromatis K."/>
            <person name="Doyle C.K."/>
            <person name="Lykidis A."/>
            <person name="Ivanova N."/>
            <person name="Francino M.P."/>
            <person name="Chain P."/>
            <person name="Shin M."/>
            <person name="Malfatti S."/>
            <person name="Larimer F."/>
            <person name="Copeland A."/>
            <person name="Detter J.C."/>
            <person name="Land M."/>
            <person name="Richardson P.M."/>
            <person name="Yu X.J."/>
            <person name="Walker D.H."/>
            <person name="McBride J.W."/>
            <person name="Kyrpides N.C."/>
        </authorList>
    </citation>
    <scope>NUCLEOTIDE SEQUENCE [LARGE SCALE GENOMIC DNA]</scope>
    <source>
        <strain>Jake</strain>
    </source>
</reference>
<accession>Q3YRS7</accession>
<comment type="similarity">
    <text evidence="1">Belongs to the bacterial ribosomal protein bL28 family.</text>
</comment>
<gene>
    <name evidence="1" type="primary">rpmB</name>
    <name type="ordered locus">Ecaj_0542</name>
</gene>